<keyword id="KW-0025">Alternative splicing</keyword>
<keyword id="KW-1185">Reference proteome</keyword>
<keyword id="KW-0687">Ribonucleoprotein</keyword>
<keyword id="KW-0689">Ribosomal protein</keyword>
<dbReference type="EMBL" id="AB019233">
    <property type="protein sequence ID" value="BAA96952.1"/>
    <property type="molecule type" value="Genomic_DNA"/>
</dbReference>
<dbReference type="EMBL" id="CP002688">
    <property type="protein sequence ID" value="AED96877.1"/>
    <property type="molecule type" value="Genomic_DNA"/>
</dbReference>
<dbReference type="EMBL" id="BT025594">
    <property type="protein sequence ID" value="ABF59012.1"/>
    <property type="molecule type" value="mRNA"/>
</dbReference>
<dbReference type="EMBL" id="AY088631">
    <property type="protein sequence ID" value="AAM66953.1"/>
    <property type="molecule type" value="mRNA"/>
</dbReference>
<dbReference type="RefSeq" id="NP_200539.1">
    <molecule id="Q9LVC9-1"/>
    <property type="nucleotide sequence ID" value="NM_125111.5"/>
</dbReference>
<dbReference type="BioGRID" id="21078">
    <property type="interactions" value="6"/>
</dbReference>
<dbReference type="FunCoup" id="Q9LVC9">
    <property type="interactions" value="569"/>
</dbReference>
<dbReference type="STRING" id="3702.Q9LVC9"/>
<dbReference type="GlyGen" id="Q9LVC9">
    <property type="glycosylation" value="1 site"/>
</dbReference>
<dbReference type="iPTMnet" id="Q9LVC9"/>
<dbReference type="PaxDb" id="3702-AT5G57290.1"/>
<dbReference type="EnsemblPlants" id="AT5G57290.1">
    <molecule id="Q9LVC9-1"/>
    <property type="protein sequence ID" value="AT5G57290.1"/>
    <property type="gene ID" value="AT5G57290"/>
</dbReference>
<dbReference type="GeneID" id="835834"/>
<dbReference type="Gramene" id="AT5G57290.1">
    <molecule id="Q9LVC9-1"/>
    <property type="protein sequence ID" value="AT5G57290.1"/>
    <property type="gene ID" value="AT5G57290"/>
</dbReference>
<dbReference type="KEGG" id="ath:AT5G57290"/>
<dbReference type="Araport" id="AT5G57290"/>
<dbReference type="TAIR" id="AT5G57290">
    <property type="gene designation" value="P3B"/>
</dbReference>
<dbReference type="eggNOG" id="ENOG502S1SG">
    <property type="taxonomic scope" value="Eukaryota"/>
</dbReference>
<dbReference type="InParanoid" id="Q9LVC9"/>
<dbReference type="OMA" id="FTFICKE"/>
<dbReference type="OrthoDB" id="2015129at2759"/>
<dbReference type="PhylomeDB" id="Q9LVC9"/>
<dbReference type="PRO" id="PR:Q9LVC9"/>
<dbReference type="Proteomes" id="UP000006548">
    <property type="component" value="Chromosome 5"/>
</dbReference>
<dbReference type="ExpressionAtlas" id="Q9LVC9">
    <property type="expression patterns" value="baseline and differential"/>
</dbReference>
<dbReference type="GO" id="GO:0022626">
    <property type="term" value="C:cytosolic ribosome"/>
    <property type="evidence" value="ECO:0007005"/>
    <property type="project" value="TAIR"/>
</dbReference>
<dbReference type="GO" id="GO:0009536">
    <property type="term" value="C:plastid"/>
    <property type="evidence" value="ECO:0007005"/>
    <property type="project" value="TAIR"/>
</dbReference>
<dbReference type="GO" id="GO:1990904">
    <property type="term" value="C:ribonucleoprotein complex"/>
    <property type="evidence" value="ECO:0007669"/>
    <property type="project" value="UniProtKB-KW"/>
</dbReference>
<dbReference type="GO" id="GO:0003735">
    <property type="term" value="F:structural constituent of ribosome"/>
    <property type="evidence" value="ECO:0000314"/>
    <property type="project" value="CAFA"/>
</dbReference>
<dbReference type="GO" id="GO:0006414">
    <property type="term" value="P:translational elongation"/>
    <property type="evidence" value="ECO:0007669"/>
    <property type="project" value="InterPro"/>
</dbReference>
<dbReference type="HAMAP" id="MF_01478">
    <property type="entry name" value="Ribosomal_L12_arch"/>
    <property type="match status" value="1"/>
</dbReference>
<dbReference type="InterPro" id="IPR027534">
    <property type="entry name" value="Ribosomal_P1/P2"/>
</dbReference>
<dbReference type="InterPro" id="IPR044252">
    <property type="entry name" value="RPP3"/>
</dbReference>
<dbReference type="PANTHER" id="PTHR47207">
    <property type="entry name" value="60S ACIDIC RIBOSOMAL PROTEIN P3-1-RELATED"/>
    <property type="match status" value="1"/>
</dbReference>
<dbReference type="PANTHER" id="PTHR47207:SF2">
    <property type="entry name" value="LARGE RIBOSOMAL SUBUNIT PROTEIN P3Y-RELATED"/>
    <property type="match status" value="1"/>
</dbReference>
<dbReference type="Pfam" id="PF00428">
    <property type="entry name" value="Ribosomal_60s"/>
    <property type="match status" value="1"/>
</dbReference>
<name>RLA32_ARATH</name>
<reference key="1">
    <citation type="journal article" date="2000" name="DNA Res.">
        <title>Structural analysis of Arabidopsis thaliana chromosome 5. X. Sequence features of the regions of 3,076,755 bp covered by sixty P1 and TAC clones.</title>
        <authorList>
            <person name="Sato S."/>
            <person name="Nakamura Y."/>
            <person name="Kaneko T."/>
            <person name="Katoh T."/>
            <person name="Asamizu E."/>
            <person name="Kotani H."/>
            <person name="Tabata S."/>
        </authorList>
    </citation>
    <scope>NUCLEOTIDE SEQUENCE [LARGE SCALE GENOMIC DNA]</scope>
    <source>
        <strain>cv. Columbia</strain>
    </source>
</reference>
<reference key="2">
    <citation type="journal article" date="2017" name="Plant J.">
        <title>Araport11: a complete reannotation of the Arabidopsis thaliana reference genome.</title>
        <authorList>
            <person name="Cheng C.Y."/>
            <person name="Krishnakumar V."/>
            <person name="Chan A.P."/>
            <person name="Thibaud-Nissen F."/>
            <person name="Schobel S."/>
            <person name="Town C.D."/>
        </authorList>
    </citation>
    <scope>GENOME REANNOTATION</scope>
    <source>
        <strain>cv. Columbia</strain>
    </source>
</reference>
<reference key="3">
    <citation type="submission" date="2006-05" db="EMBL/GenBank/DDBJ databases">
        <title>Arabidopsis ORF clones.</title>
        <authorList>
            <person name="Quinitio C."/>
            <person name="Chen H."/>
            <person name="Kim C.J."/>
            <person name="Shinn P."/>
            <person name="Ecker J.R."/>
        </authorList>
    </citation>
    <scope>NUCLEOTIDE SEQUENCE [LARGE SCALE MRNA]</scope>
    <source>
        <strain>cv. Columbia</strain>
    </source>
</reference>
<reference key="4">
    <citation type="submission" date="2002-03" db="EMBL/GenBank/DDBJ databases">
        <title>Full-length cDNA from Arabidopsis thaliana.</title>
        <authorList>
            <person name="Brover V.V."/>
            <person name="Troukhan M.E."/>
            <person name="Alexandrov N.A."/>
            <person name="Lu Y.-P."/>
            <person name="Flavell R.B."/>
            <person name="Feldmann K.A."/>
        </authorList>
    </citation>
    <scope>NUCLEOTIDE SEQUENCE [LARGE SCALE MRNA]</scope>
</reference>
<reference key="5">
    <citation type="journal article" date="2001" name="Plant Physiol.">
        <title>The organization of cytoplasmic ribosomal protein genes in the Arabidopsis genome.</title>
        <authorList>
            <person name="Barakat A."/>
            <person name="Szick-Miranda K."/>
            <person name="Chang I.-F."/>
            <person name="Guyot R."/>
            <person name="Blanc G."/>
            <person name="Cooke R."/>
            <person name="Delseny M."/>
            <person name="Bailey-Serres J."/>
        </authorList>
    </citation>
    <scope>GENE FAMILY ORGANIZATION</scope>
    <scope>NOMENCLATURE</scope>
</reference>
<reference key="6">
    <citation type="journal article" date="2023" name="Plant Cell">
        <title>An updated nomenclature for plant ribosomal protein genes.</title>
        <authorList>
            <person name="Scarpin M.R."/>
            <person name="Busche M."/>
            <person name="Martinez R.E."/>
            <person name="Harper L.C."/>
            <person name="Reiser L."/>
            <person name="Szakonyi D."/>
            <person name="Merchante C."/>
            <person name="Lan T."/>
            <person name="Xiong W."/>
            <person name="Mo B."/>
            <person name="Tang G."/>
            <person name="Chen X."/>
            <person name="Bailey-Serres J."/>
            <person name="Browning K.S."/>
            <person name="Brunkard J.O."/>
        </authorList>
    </citation>
    <scope>NOMENCLATURE</scope>
</reference>
<sequence length="120" mass="11863">MGVFSFVCKSKGGEWTAKQHEGDLEASASSTYDLQRKLVQTALSADSSGGVQSSFSLVSPTSAVFVVVIGGGGGGGFAAGGGAAAGGGGGGEAAAATKEEEKKKEESEEEEGDFGFDLFG</sequence>
<feature type="chain" id="PRO_0000245780" description="Large ribosomal subunit protein P3y">
    <location>
        <begin position="1"/>
        <end position="120"/>
    </location>
</feature>
<feature type="region of interest" description="Disordered" evidence="2">
    <location>
        <begin position="81"/>
        <end position="120"/>
    </location>
</feature>
<feature type="compositionally biased region" description="Gly residues" evidence="2">
    <location>
        <begin position="81"/>
        <end position="92"/>
    </location>
</feature>
<feature type="compositionally biased region" description="Basic and acidic residues" evidence="2">
    <location>
        <begin position="97"/>
        <end position="106"/>
    </location>
</feature>
<organism>
    <name type="scientific">Arabidopsis thaliana</name>
    <name type="common">Mouse-ear cress</name>
    <dbReference type="NCBI Taxonomy" id="3702"/>
    <lineage>
        <taxon>Eukaryota</taxon>
        <taxon>Viridiplantae</taxon>
        <taxon>Streptophyta</taxon>
        <taxon>Embryophyta</taxon>
        <taxon>Tracheophyta</taxon>
        <taxon>Spermatophyta</taxon>
        <taxon>Magnoliopsida</taxon>
        <taxon>eudicotyledons</taxon>
        <taxon>Gunneridae</taxon>
        <taxon>Pentapetalae</taxon>
        <taxon>rosids</taxon>
        <taxon>malvids</taxon>
        <taxon>Brassicales</taxon>
        <taxon>Brassicaceae</taxon>
        <taxon>Camelineae</taxon>
        <taxon>Arabidopsis</taxon>
    </lineage>
</organism>
<protein>
    <recommendedName>
        <fullName evidence="3">Large ribosomal subunit protein P3y</fullName>
    </recommendedName>
    <alternativeName>
        <fullName>60S acidic ribosomal protein P3-2</fullName>
    </alternativeName>
</protein>
<evidence type="ECO:0000250" key="1"/>
<evidence type="ECO:0000256" key="2">
    <source>
        <dbReference type="SAM" id="MobiDB-lite"/>
    </source>
</evidence>
<evidence type="ECO:0000303" key="3">
    <source>
    </source>
</evidence>
<evidence type="ECO:0000305" key="4"/>
<proteinExistence type="evidence at transcript level"/>
<comment type="function">
    <text evidence="1">Plays an important role in the elongation step of protein synthesis.</text>
</comment>
<comment type="alternative products">
    <event type="alternative splicing"/>
    <isoform>
        <id>Q9LVC9-1</id>
        <name>1</name>
        <sequence type="displayed"/>
    </isoform>
    <text>A number of isoforms are produced. According to EST sequences.</text>
</comment>
<comment type="similarity">
    <text evidence="4">Belongs to the eukaryotic ribosomal protein P1/P2 family.</text>
</comment>
<gene>
    <name type="primary">RPP3B</name>
    <name type="ordered locus">At5g57290</name>
    <name type="ORF">MJB24.10</name>
</gene>
<accession>Q9LVC9</accession>